<protein>
    <recommendedName>
        <fullName>Putative protein p25</fullName>
    </recommendedName>
</protein>
<organism>
    <name type="scientific">Acyrthosiphon pisum secondary endosymbiont phage 1</name>
    <name type="common">Bacteriophage APSE-1</name>
    <dbReference type="NCBI Taxonomy" id="2682836"/>
    <lineage>
        <taxon>Viruses</taxon>
        <taxon>Duplodnaviria</taxon>
        <taxon>Heunggongvirae</taxon>
        <taxon>Uroviricota</taxon>
        <taxon>Caudoviricetes</taxon>
        <taxon>Sendosyvirus</taxon>
        <taxon>Sendosyvirus APSE1</taxon>
    </lineage>
</organism>
<sequence length="101" mass="11980">MRIKADISRQQVKTHHLLVCVTIRIFVYTNRKPFIRCHGGVKAMQFWQGDGPKPTEKLIVEKIRFHLLFSRSYDRNCISCLNFCINGIVLRIFFIINRNTR</sequence>
<feature type="chain" id="PRO_0000077864" description="Putative protein p25">
    <location>
        <begin position="1"/>
        <end position="101"/>
    </location>
</feature>
<reference key="1">
    <citation type="journal article" date="1999" name="Virology">
        <title>Isolation and characterization of APSE-1, a bacteriophage infecting the secondary endosymbiont of acyrthosiphon pisum.</title>
        <authorList>
            <person name="van der Wilk F."/>
            <person name="Dullemans A.M."/>
            <person name="Verbeek M."/>
            <person name="van den Heuvel J.F.J.M."/>
        </authorList>
    </citation>
    <scope>NUCLEOTIDE SEQUENCE [LARGE SCALE GENOMIC DNA]</scope>
</reference>
<keyword id="KW-1185">Reference proteome</keyword>
<organismHost>
    <name type="scientific">Escherichia coli</name>
    <dbReference type="NCBI Taxonomy" id="562"/>
</organismHost>
<name>VP25_BPAPS</name>
<dbReference type="EMBL" id="AF157835">
    <property type="protein sequence ID" value="AAF03968.1"/>
    <property type="molecule type" value="Genomic_DNA"/>
</dbReference>
<dbReference type="RefSeq" id="NP_050986.1">
    <property type="nucleotide sequence ID" value="NC_000935.1"/>
</dbReference>
<dbReference type="KEGG" id="vg:1262319"/>
<dbReference type="Proteomes" id="UP000000853">
    <property type="component" value="Genome"/>
</dbReference>
<gene>
    <name type="primary">25</name>
</gene>
<accession>Q9T1S3</accession>
<proteinExistence type="predicted"/>